<gene>
    <name evidence="1" type="primary">clpX</name>
    <name type="ordered locus">BMEI0875</name>
</gene>
<keyword id="KW-0067">ATP-binding</keyword>
<keyword id="KW-0143">Chaperone</keyword>
<keyword id="KW-0479">Metal-binding</keyword>
<keyword id="KW-0547">Nucleotide-binding</keyword>
<keyword id="KW-0862">Zinc</keyword>
<sequence length="424" mass="46656">MSKVSNGGGDSKNTLYCSFCGKSQHEVRKLIAGPTVFICDECVELCMDIIREENKSSMVKSREGVPTPQEIMAVLDDYVIGQKDAKRVLSVAVHNHYKRLAHQSKNSDIELAKSNILLVGPTGCGKTYLAQTLARIIDVPFIMADATTLTEAGYVGEDVENIILKLLQAADYNVERAQRGIVYIDEVDKISRKSDNPSITRDVSGEGVQQALLKIMEGTVASVPPQGGRKHPQQEFLQVDTTNILFICGGAFAGLDRIISARGEKTSIGFGATVKSVDERRIGEVFKELEPEDLLKFGLIPEFVGRLPVIATLEDLDVDALVQILTEPKNALVKQYQRLFDMENVELVFHDDALRAIANKAVERKTGARGLRSIMEKILLDTMFELPTLEGVREVVISGDVVDGSARPLYIYAERQDEKGNVSA</sequence>
<evidence type="ECO:0000255" key="1">
    <source>
        <dbReference type="HAMAP-Rule" id="MF_00175"/>
    </source>
</evidence>
<evidence type="ECO:0000255" key="2">
    <source>
        <dbReference type="PROSITE-ProRule" id="PRU01250"/>
    </source>
</evidence>
<reference key="1">
    <citation type="journal article" date="2002" name="Proc. Natl. Acad. Sci. U.S.A.">
        <title>The genome sequence of the facultative intracellular pathogen Brucella melitensis.</title>
        <authorList>
            <person name="DelVecchio V.G."/>
            <person name="Kapatral V."/>
            <person name="Redkar R.J."/>
            <person name="Patra G."/>
            <person name="Mujer C."/>
            <person name="Los T."/>
            <person name="Ivanova N."/>
            <person name="Anderson I."/>
            <person name="Bhattacharyya A."/>
            <person name="Lykidis A."/>
            <person name="Reznik G."/>
            <person name="Jablonski L."/>
            <person name="Larsen N."/>
            <person name="D'Souza M."/>
            <person name="Bernal A."/>
            <person name="Mazur M."/>
            <person name="Goltsman E."/>
            <person name="Selkov E."/>
            <person name="Elzer P.H."/>
            <person name="Hagius S."/>
            <person name="O'Callaghan D."/>
            <person name="Letesson J.-J."/>
            <person name="Haselkorn R."/>
            <person name="Kyrpides N.C."/>
            <person name="Overbeek R."/>
        </authorList>
    </citation>
    <scope>NUCLEOTIDE SEQUENCE [LARGE SCALE GENOMIC DNA]</scope>
    <source>
        <strain>ATCC 23456 / CCUG 17765 / NCTC 10094 / 16M</strain>
    </source>
</reference>
<proteinExistence type="inferred from homology"/>
<dbReference type="EMBL" id="AE008917">
    <property type="protein sequence ID" value="AAL52056.1"/>
    <property type="molecule type" value="Genomic_DNA"/>
</dbReference>
<dbReference type="PIR" id="AE3361">
    <property type="entry name" value="AE3361"/>
</dbReference>
<dbReference type="RefSeq" id="WP_002964236.1">
    <property type="nucleotide sequence ID" value="NZ_GG703780.1"/>
</dbReference>
<dbReference type="SMR" id="Q8YHC7"/>
<dbReference type="GeneID" id="93016553"/>
<dbReference type="KEGG" id="bme:BMEI0875"/>
<dbReference type="KEGG" id="bmel:DK63_547"/>
<dbReference type="PATRIC" id="fig|224914.52.peg.569"/>
<dbReference type="eggNOG" id="COG1219">
    <property type="taxonomic scope" value="Bacteria"/>
</dbReference>
<dbReference type="PhylomeDB" id="Q8YHC7"/>
<dbReference type="Proteomes" id="UP000000419">
    <property type="component" value="Chromosome I"/>
</dbReference>
<dbReference type="GO" id="GO:0009376">
    <property type="term" value="C:HslUV protease complex"/>
    <property type="evidence" value="ECO:0007669"/>
    <property type="project" value="TreeGrafter"/>
</dbReference>
<dbReference type="GO" id="GO:0005524">
    <property type="term" value="F:ATP binding"/>
    <property type="evidence" value="ECO:0007669"/>
    <property type="project" value="UniProtKB-UniRule"/>
</dbReference>
<dbReference type="GO" id="GO:0016887">
    <property type="term" value="F:ATP hydrolysis activity"/>
    <property type="evidence" value="ECO:0007669"/>
    <property type="project" value="InterPro"/>
</dbReference>
<dbReference type="GO" id="GO:0140662">
    <property type="term" value="F:ATP-dependent protein folding chaperone"/>
    <property type="evidence" value="ECO:0007669"/>
    <property type="project" value="InterPro"/>
</dbReference>
<dbReference type="GO" id="GO:0046983">
    <property type="term" value="F:protein dimerization activity"/>
    <property type="evidence" value="ECO:0007669"/>
    <property type="project" value="InterPro"/>
</dbReference>
<dbReference type="GO" id="GO:0051082">
    <property type="term" value="F:unfolded protein binding"/>
    <property type="evidence" value="ECO:0007669"/>
    <property type="project" value="UniProtKB-UniRule"/>
</dbReference>
<dbReference type="GO" id="GO:0008270">
    <property type="term" value="F:zinc ion binding"/>
    <property type="evidence" value="ECO:0007669"/>
    <property type="project" value="InterPro"/>
</dbReference>
<dbReference type="GO" id="GO:0051301">
    <property type="term" value="P:cell division"/>
    <property type="evidence" value="ECO:0007669"/>
    <property type="project" value="TreeGrafter"/>
</dbReference>
<dbReference type="GO" id="GO:0051603">
    <property type="term" value="P:proteolysis involved in protein catabolic process"/>
    <property type="evidence" value="ECO:0007669"/>
    <property type="project" value="TreeGrafter"/>
</dbReference>
<dbReference type="CDD" id="cd19497">
    <property type="entry name" value="RecA-like_ClpX"/>
    <property type="match status" value="1"/>
</dbReference>
<dbReference type="FunFam" id="1.10.8.60:FF:000002">
    <property type="entry name" value="ATP-dependent Clp protease ATP-binding subunit ClpX"/>
    <property type="match status" value="1"/>
</dbReference>
<dbReference type="FunFam" id="3.40.50.300:FF:000005">
    <property type="entry name" value="ATP-dependent Clp protease ATP-binding subunit ClpX"/>
    <property type="match status" value="1"/>
</dbReference>
<dbReference type="Gene3D" id="1.10.8.60">
    <property type="match status" value="1"/>
</dbReference>
<dbReference type="Gene3D" id="6.20.220.10">
    <property type="entry name" value="ClpX chaperone, C4-type zinc finger domain"/>
    <property type="match status" value="1"/>
</dbReference>
<dbReference type="Gene3D" id="3.40.50.300">
    <property type="entry name" value="P-loop containing nucleotide triphosphate hydrolases"/>
    <property type="match status" value="1"/>
</dbReference>
<dbReference type="HAMAP" id="MF_00175">
    <property type="entry name" value="ClpX"/>
    <property type="match status" value="1"/>
</dbReference>
<dbReference type="InterPro" id="IPR003593">
    <property type="entry name" value="AAA+_ATPase"/>
</dbReference>
<dbReference type="InterPro" id="IPR050052">
    <property type="entry name" value="ATP-dep_Clp_protease_ClpX"/>
</dbReference>
<dbReference type="InterPro" id="IPR003959">
    <property type="entry name" value="ATPase_AAA_core"/>
</dbReference>
<dbReference type="InterPro" id="IPR019489">
    <property type="entry name" value="Clp_ATPase_C"/>
</dbReference>
<dbReference type="InterPro" id="IPR004487">
    <property type="entry name" value="Clp_protease_ATP-bd_su_ClpX"/>
</dbReference>
<dbReference type="InterPro" id="IPR046425">
    <property type="entry name" value="ClpX_bact"/>
</dbReference>
<dbReference type="InterPro" id="IPR027417">
    <property type="entry name" value="P-loop_NTPase"/>
</dbReference>
<dbReference type="InterPro" id="IPR010603">
    <property type="entry name" value="Znf_CppX_C4"/>
</dbReference>
<dbReference type="InterPro" id="IPR038366">
    <property type="entry name" value="Znf_CppX_C4_sf"/>
</dbReference>
<dbReference type="NCBIfam" id="TIGR00382">
    <property type="entry name" value="clpX"/>
    <property type="match status" value="1"/>
</dbReference>
<dbReference type="NCBIfam" id="NF003745">
    <property type="entry name" value="PRK05342.1"/>
    <property type="match status" value="1"/>
</dbReference>
<dbReference type="PANTHER" id="PTHR48102:SF7">
    <property type="entry name" value="ATP-DEPENDENT CLP PROTEASE ATP-BINDING SUBUNIT CLPX-LIKE, MITOCHONDRIAL"/>
    <property type="match status" value="1"/>
</dbReference>
<dbReference type="PANTHER" id="PTHR48102">
    <property type="entry name" value="ATP-DEPENDENT CLP PROTEASE ATP-BINDING SUBUNIT CLPX-LIKE, MITOCHONDRIAL-RELATED"/>
    <property type="match status" value="1"/>
</dbReference>
<dbReference type="Pfam" id="PF07724">
    <property type="entry name" value="AAA_2"/>
    <property type="match status" value="1"/>
</dbReference>
<dbReference type="Pfam" id="PF10431">
    <property type="entry name" value="ClpB_D2-small"/>
    <property type="match status" value="1"/>
</dbReference>
<dbReference type="Pfam" id="PF06689">
    <property type="entry name" value="zf-C4_ClpX"/>
    <property type="match status" value="1"/>
</dbReference>
<dbReference type="SMART" id="SM00382">
    <property type="entry name" value="AAA"/>
    <property type="match status" value="1"/>
</dbReference>
<dbReference type="SMART" id="SM01086">
    <property type="entry name" value="ClpB_D2-small"/>
    <property type="match status" value="1"/>
</dbReference>
<dbReference type="SMART" id="SM00994">
    <property type="entry name" value="zf-C4_ClpX"/>
    <property type="match status" value="1"/>
</dbReference>
<dbReference type="SUPFAM" id="SSF57716">
    <property type="entry name" value="Glucocorticoid receptor-like (DNA-binding domain)"/>
    <property type="match status" value="1"/>
</dbReference>
<dbReference type="SUPFAM" id="SSF52540">
    <property type="entry name" value="P-loop containing nucleoside triphosphate hydrolases"/>
    <property type="match status" value="1"/>
</dbReference>
<dbReference type="PROSITE" id="PS51902">
    <property type="entry name" value="CLPX_ZB"/>
    <property type="match status" value="1"/>
</dbReference>
<name>CLPX_BRUME</name>
<comment type="function">
    <text evidence="1">ATP-dependent specificity component of the Clp protease. It directs the protease to specific substrates. Can perform chaperone functions in the absence of ClpP.</text>
</comment>
<comment type="subunit">
    <text evidence="1">Component of the ClpX-ClpP complex. Forms a hexameric ring that, in the presence of ATP, binds to fourteen ClpP subunits assembled into a disk-like structure with a central cavity, resembling the structure of eukaryotic proteasomes.</text>
</comment>
<comment type="similarity">
    <text evidence="1">Belongs to the ClpX chaperone family.</text>
</comment>
<organism>
    <name type="scientific">Brucella melitensis biotype 1 (strain ATCC 23456 / CCUG 17765 / NCTC 10094 / 16M)</name>
    <dbReference type="NCBI Taxonomy" id="224914"/>
    <lineage>
        <taxon>Bacteria</taxon>
        <taxon>Pseudomonadati</taxon>
        <taxon>Pseudomonadota</taxon>
        <taxon>Alphaproteobacteria</taxon>
        <taxon>Hyphomicrobiales</taxon>
        <taxon>Brucellaceae</taxon>
        <taxon>Brucella/Ochrobactrum group</taxon>
        <taxon>Brucella</taxon>
    </lineage>
</organism>
<feature type="chain" id="PRO_0000160326" description="ATP-dependent Clp protease ATP-binding subunit ClpX">
    <location>
        <begin position="1"/>
        <end position="424"/>
    </location>
</feature>
<feature type="domain" description="ClpX-type ZB" evidence="2">
    <location>
        <begin position="5"/>
        <end position="58"/>
    </location>
</feature>
<feature type="binding site" evidence="2">
    <location>
        <position position="17"/>
    </location>
    <ligand>
        <name>Zn(2+)</name>
        <dbReference type="ChEBI" id="CHEBI:29105"/>
    </ligand>
</feature>
<feature type="binding site" evidence="2">
    <location>
        <position position="20"/>
    </location>
    <ligand>
        <name>Zn(2+)</name>
        <dbReference type="ChEBI" id="CHEBI:29105"/>
    </ligand>
</feature>
<feature type="binding site" evidence="2">
    <location>
        <position position="39"/>
    </location>
    <ligand>
        <name>Zn(2+)</name>
        <dbReference type="ChEBI" id="CHEBI:29105"/>
    </ligand>
</feature>
<feature type="binding site" evidence="2">
    <location>
        <position position="42"/>
    </location>
    <ligand>
        <name>Zn(2+)</name>
        <dbReference type="ChEBI" id="CHEBI:29105"/>
    </ligand>
</feature>
<feature type="binding site" evidence="1">
    <location>
        <begin position="121"/>
        <end position="128"/>
    </location>
    <ligand>
        <name>ATP</name>
        <dbReference type="ChEBI" id="CHEBI:30616"/>
    </ligand>
</feature>
<accession>Q8YHC7</accession>
<protein>
    <recommendedName>
        <fullName evidence="1">ATP-dependent Clp protease ATP-binding subunit ClpX</fullName>
    </recommendedName>
</protein>